<name>RLMN_YERPG</name>
<accession>A9R805</accession>
<feature type="chain" id="PRO_0000350540" description="Dual-specificity RNA methyltransferase RlmN">
    <location>
        <begin position="1"/>
        <end position="398"/>
    </location>
</feature>
<feature type="domain" description="Radical SAM core" evidence="2">
    <location>
        <begin position="125"/>
        <end position="364"/>
    </location>
</feature>
<feature type="active site" description="Proton acceptor" evidence="1">
    <location>
        <position position="119"/>
    </location>
</feature>
<feature type="active site" description="S-methylcysteine intermediate" evidence="1">
    <location>
        <position position="369"/>
    </location>
</feature>
<feature type="binding site" evidence="1">
    <location>
        <position position="139"/>
    </location>
    <ligand>
        <name>[4Fe-4S] cluster</name>
        <dbReference type="ChEBI" id="CHEBI:49883"/>
        <note>4Fe-4S-S-AdoMet</note>
    </ligand>
</feature>
<feature type="binding site" evidence="1">
    <location>
        <position position="143"/>
    </location>
    <ligand>
        <name>[4Fe-4S] cluster</name>
        <dbReference type="ChEBI" id="CHEBI:49883"/>
        <note>4Fe-4S-S-AdoMet</note>
    </ligand>
</feature>
<feature type="binding site" evidence="1">
    <location>
        <position position="146"/>
    </location>
    <ligand>
        <name>[4Fe-4S] cluster</name>
        <dbReference type="ChEBI" id="CHEBI:49883"/>
        <note>4Fe-4S-S-AdoMet</note>
    </ligand>
</feature>
<feature type="binding site" evidence="1">
    <location>
        <begin position="193"/>
        <end position="194"/>
    </location>
    <ligand>
        <name>S-adenosyl-L-methionine</name>
        <dbReference type="ChEBI" id="CHEBI:59789"/>
    </ligand>
</feature>
<feature type="binding site" evidence="1">
    <location>
        <position position="225"/>
    </location>
    <ligand>
        <name>S-adenosyl-L-methionine</name>
        <dbReference type="ChEBI" id="CHEBI:59789"/>
    </ligand>
</feature>
<feature type="binding site" evidence="1">
    <location>
        <begin position="247"/>
        <end position="249"/>
    </location>
    <ligand>
        <name>S-adenosyl-L-methionine</name>
        <dbReference type="ChEBI" id="CHEBI:59789"/>
    </ligand>
</feature>
<feature type="binding site" evidence="1">
    <location>
        <position position="326"/>
    </location>
    <ligand>
        <name>S-adenosyl-L-methionine</name>
        <dbReference type="ChEBI" id="CHEBI:59789"/>
    </ligand>
</feature>
<feature type="disulfide bond" description="(transient)" evidence="1">
    <location>
        <begin position="132"/>
        <end position="369"/>
    </location>
</feature>
<protein>
    <recommendedName>
        <fullName evidence="1">Dual-specificity RNA methyltransferase RlmN</fullName>
        <ecNumber evidence="1">2.1.1.192</ecNumber>
    </recommendedName>
    <alternativeName>
        <fullName evidence="1">23S rRNA (adenine(2503)-C(2))-methyltransferase</fullName>
    </alternativeName>
    <alternativeName>
        <fullName evidence="1">23S rRNA m2A2503 methyltransferase</fullName>
    </alternativeName>
    <alternativeName>
        <fullName evidence="1">Ribosomal RNA large subunit methyltransferase N</fullName>
    </alternativeName>
    <alternativeName>
        <fullName evidence="1">tRNA (adenine(37)-C(2))-methyltransferase</fullName>
    </alternativeName>
    <alternativeName>
        <fullName evidence="1">tRNA m2A37 methyltransferase</fullName>
    </alternativeName>
</protein>
<dbReference type="EC" id="2.1.1.192" evidence="1"/>
<dbReference type="EMBL" id="CP000901">
    <property type="protein sequence ID" value="ABX86149.1"/>
    <property type="molecule type" value="Genomic_DNA"/>
</dbReference>
<dbReference type="RefSeq" id="WP_002209820.1">
    <property type="nucleotide sequence ID" value="NZ_CP009935.1"/>
</dbReference>
<dbReference type="SMR" id="A9R805"/>
<dbReference type="KEGG" id="ypg:YpAngola_A0421"/>
<dbReference type="PATRIC" id="fig|349746.12.peg.1375"/>
<dbReference type="GO" id="GO:0005737">
    <property type="term" value="C:cytoplasm"/>
    <property type="evidence" value="ECO:0007669"/>
    <property type="project" value="UniProtKB-SubCell"/>
</dbReference>
<dbReference type="GO" id="GO:0051539">
    <property type="term" value="F:4 iron, 4 sulfur cluster binding"/>
    <property type="evidence" value="ECO:0007669"/>
    <property type="project" value="UniProtKB-UniRule"/>
</dbReference>
<dbReference type="GO" id="GO:0046872">
    <property type="term" value="F:metal ion binding"/>
    <property type="evidence" value="ECO:0007669"/>
    <property type="project" value="UniProtKB-KW"/>
</dbReference>
<dbReference type="GO" id="GO:0070040">
    <property type="term" value="F:rRNA (adenine(2503)-C2-)-methyltransferase activity"/>
    <property type="evidence" value="ECO:0007669"/>
    <property type="project" value="UniProtKB-UniRule"/>
</dbReference>
<dbReference type="GO" id="GO:0019843">
    <property type="term" value="F:rRNA binding"/>
    <property type="evidence" value="ECO:0007669"/>
    <property type="project" value="UniProtKB-UniRule"/>
</dbReference>
<dbReference type="GO" id="GO:0002935">
    <property type="term" value="F:tRNA (adenine(37)-C2)-methyltransferase activity"/>
    <property type="evidence" value="ECO:0007669"/>
    <property type="project" value="UniProtKB-UniRule"/>
</dbReference>
<dbReference type="GO" id="GO:0000049">
    <property type="term" value="F:tRNA binding"/>
    <property type="evidence" value="ECO:0007669"/>
    <property type="project" value="UniProtKB-UniRule"/>
</dbReference>
<dbReference type="GO" id="GO:0070475">
    <property type="term" value="P:rRNA base methylation"/>
    <property type="evidence" value="ECO:0007669"/>
    <property type="project" value="UniProtKB-UniRule"/>
</dbReference>
<dbReference type="GO" id="GO:0030488">
    <property type="term" value="P:tRNA methylation"/>
    <property type="evidence" value="ECO:0007669"/>
    <property type="project" value="UniProtKB-UniRule"/>
</dbReference>
<dbReference type="CDD" id="cd01335">
    <property type="entry name" value="Radical_SAM"/>
    <property type="match status" value="1"/>
</dbReference>
<dbReference type="FunFam" id="1.10.150.530:FF:000001">
    <property type="entry name" value="Dual-specificity RNA methyltransferase RlmN"/>
    <property type="match status" value="1"/>
</dbReference>
<dbReference type="FunFam" id="3.20.20.70:FF:000008">
    <property type="entry name" value="Dual-specificity RNA methyltransferase RlmN"/>
    <property type="match status" value="1"/>
</dbReference>
<dbReference type="Gene3D" id="1.10.150.530">
    <property type="match status" value="1"/>
</dbReference>
<dbReference type="Gene3D" id="3.20.20.70">
    <property type="entry name" value="Aldolase class I"/>
    <property type="match status" value="1"/>
</dbReference>
<dbReference type="HAMAP" id="MF_01849">
    <property type="entry name" value="RNA_methyltr_RlmN"/>
    <property type="match status" value="1"/>
</dbReference>
<dbReference type="InterPro" id="IPR013785">
    <property type="entry name" value="Aldolase_TIM"/>
</dbReference>
<dbReference type="InterPro" id="IPR040072">
    <property type="entry name" value="Methyltransferase_A"/>
</dbReference>
<dbReference type="InterPro" id="IPR048641">
    <property type="entry name" value="RlmN_N"/>
</dbReference>
<dbReference type="InterPro" id="IPR027492">
    <property type="entry name" value="RNA_MTrfase_RlmN"/>
</dbReference>
<dbReference type="InterPro" id="IPR004383">
    <property type="entry name" value="rRNA_lsu_MTrfase_RlmN/Cfr"/>
</dbReference>
<dbReference type="InterPro" id="IPR007197">
    <property type="entry name" value="rSAM"/>
</dbReference>
<dbReference type="NCBIfam" id="NF008396">
    <property type="entry name" value="PRK11194.1"/>
    <property type="match status" value="1"/>
</dbReference>
<dbReference type="NCBIfam" id="TIGR00048">
    <property type="entry name" value="rRNA_mod_RlmN"/>
    <property type="match status" value="1"/>
</dbReference>
<dbReference type="PANTHER" id="PTHR30544">
    <property type="entry name" value="23S RRNA METHYLTRANSFERASE"/>
    <property type="match status" value="1"/>
</dbReference>
<dbReference type="PANTHER" id="PTHR30544:SF5">
    <property type="entry name" value="RADICAL SAM CORE DOMAIN-CONTAINING PROTEIN"/>
    <property type="match status" value="1"/>
</dbReference>
<dbReference type="Pfam" id="PF04055">
    <property type="entry name" value="Radical_SAM"/>
    <property type="match status" value="1"/>
</dbReference>
<dbReference type="Pfam" id="PF21016">
    <property type="entry name" value="RlmN_N"/>
    <property type="match status" value="1"/>
</dbReference>
<dbReference type="PIRSF" id="PIRSF006004">
    <property type="entry name" value="CHP00048"/>
    <property type="match status" value="1"/>
</dbReference>
<dbReference type="SFLD" id="SFLDF00275">
    <property type="entry name" value="adenosine_C2_methyltransferase"/>
    <property type="match status" value="1"/>
</dbReference>
<dbReference type="SFLD" id="SFLDG01062">
    <property type="entry name" value="methyltransferase_(Class_A)"/>
    <property type="match status" value="1"/>
</dbReference>
<dbReference type="SUPFAM" id="SSF102114">
    <property type="entry name" value="Radical SAM enzymes"/>
    <property type="match status" value="1"/>
</dbReference>
<dbReference type="PROSITE" id="PS51918">
    <property type="entry name" value="RADICAL_SAM"/>
    <property type="match status" value="1"/>
</dbReference>
<proteinExistence type="inferred from homology"/>
<keyword id="KW-0004">4Fe-4S</keyword>
<keyword id="KW-0963">Cytoplasm</keyword>
<keyword id="KW-1015">Disulfide bond</keyword>
<keyword id="KW-0408">Iron</keyword>
<keyword id="KW-0411">Iron-sulfur</keyword>
<keyword id="KW-0479">Metal-binding</keyword>
<keyword id="KW-0489">Methyltransferase</keyword>
<keyword id="KW-0698">rRNA processing</keyword>
<keyword id="KW-0949">S-adenosyl-L-methionine</keyword>
<keyword id="KW-0808">Transferase</keyword>
<keyword id="KW-0819">tRNA processing</keyword>
<organism>
    <name type="scientific">Yersinia pestis bv. Antiqua (strain Angola)</name>
    <dbReference type="NCBI Taxonomy" id="349746"/>
    <lineage>
        <taxon>Bacteria</taxon>
        <taxon>Pseudomonadati</taxon>
        <taxon>Pseudomonadota</taxon>
        <taxon>Gammaproteobacteria</taxon>
        <taxon>Enterobacterales</taxon>
        <taxon>Yersiniaceae</taxon>
        <taxon>Yersinia</taxon>
    </lineage>
</organism>
<comment type="function">
    <text evidence="1">Specifically methylates position 2 of adenine 2503 in 23S rRNA and position 2 of adenine 37 in tRNAs. m2A2503 modification seems to play a crucial role in the proofreading step occurring at the peptidyl transferase center and thus would serve to optimize ribosomal fidelity.</text>
</comment>
<comment type="catalytic activity">
    <reaction evidence="1">
        <text>adenosine(2503) in 23S rRNA + 2 reduced [2Fe-2S]-[ferredoxin] + 2 S-adenosyl-L-methionine = 2-methyladenosine(2503) in 23S rRNA + 5'-deoxyadenosine + L-methionine + 2 oxidized [2Fe-2S]-[ferredoxin] + S-adenosyl-L-homocysteine</text>
        <dbReference type="Rhea" id="RHEA:42916"/>
        <dbReference type="Rhea" id="RHEA-COMP:10000"/>
        <dbReference type="Rhea" id="RHEA-COMP:10001"/>
        <dbReference type="Rhea" id="RHEA-COMP:10152"/>
        <dbReference type="Rhea" id="RHEA-COMP:10282"/>
        <dbReference type="ChEBI" id="CHEBI:17319"/>
        <dbReference type="ChEBI" id="CHEBI:33737"/>
        <dbReference type="ChEBI" id="CHEBI:33738"/>
        <dbReference type="ChEBI" id="CHEBI:57844"/>
        <dbReference type="ChEBI" id="CHEBI:57856"/>
        <dbReference type="ChEBI" id="CHEBI:59789"/>
        <dbReference type="ChEBI" id="CHEBI:74411"/>
        <dbReference type="ChEBI" id="CHEBI:74497"/>
        <dbReference type="EC" id="2.1.1.192"/>
    </reaction>
</comment>
<comment type="catalytic activity">
    <reaction evidence="1">
        <text>adenosine(37) in tRNA + 2 reduced [2Fe-2S]-[ferredoxin] + 2 S-adenosyl-L-methionine = 2-methyladenosine(37) in tRNA + 5'-deoxyadenosine + L-methionine + 2 oxidized [2Fe-2S]-[ferredoxin] + S-adenosyl-L-homocysteine</text>
        <dbReference type="Rhea" id="RHEA:43332"/>
        <dbReference type="Rhea" id="RHEA-COMP:10000"/>
        <dbReference type="Rhea" id="RHEA-COMP:10001"/>
        <dbReference type="Rhea" id="RHEA-COMP:10162"/>
        <dbReference type="Rhea" id="RHEA-COMP:10485"/>
        <dbReference type="ChEBI" id="CHEBI:17319"/>
        <dbReference type="ChEBI" id="CHEBI:33737"/>
        <dbReference type="ChEBI" id="CHEBI:33738"/>
        <dbReference type="ChEBI" id="CHEBI:57844"/>
        <dbReference type="ChEBI" id="CHEBI:57856"/>
        <dbReference type="ChEBI" id="CHEBI:59789"/>
        <dbReference type="ChEBI" id="CHEBI:74411"/>
        <dbReference type="ChEBI" id="CHEBI:74497"/>
        <dbReference type="EC" id="2.1.1.192"/>
    </reaction>
</comment>
<comment type="cofactor">
    <cofactor evidence="1">
        <name>[4Fe-4S] cluster</name>
        <dbReference type="ChEBI" id="CHEBI:49883"/>
    </cofactor>
    <text evidence="1">Binds 1 [4Fe-4S] cluster. The cluster is coordinated with 3 cysteines and an exchangeable S-adenosyl-L-methionine.</text>
</comment>
<comment type="subcellular location">
    <subcellularLocation>
        <location evidence="1">Cytoplasm</location>
    </subcellularLocation>
</comment>
<comment type="miscellaneous">
    <text evidence="1">Reaction proceeds by a ping-pong mechanism involving intermediate methylation of a conserved cysteine residue.</text>
</comment>
<comment type="similarity">
    <text evidence="1">Belongs to the radical SAM superfamily. RlmN family.</text>
</comment>
<gene>
    <name evidence="1" type="primary">rlmN</name>
    <name type="ordered locus">YpAngola_A0421</name>
</gene>
<sequence>MSEQLLTASTPIDAAPLSDNTVQTTAPATSKINLLDLNRQQMREFFAEMGEKPFRADQVMKWMYHYCYDDFEQMTDINKGLRAKLQRVAEIRAPEVAEEQRSVDGTIKWAIKVGDQQVETVYIPEADRATLCVSSQVGCALECKFCSTAQQGFNRNLRVSEIIGQVWRAAKIIGSLKSTGTRPITNVVMMGMGEPLLNLNNVVPAMDIMMDDFGFGLSKRRVTLSTSGVVPALDKLGDMIDVALAISLHAPTDDIRDEIVPINRKYNIETFLAAVRRYLDKSKANGGRVTVEYVMLDHINDSTEQAHQLAECLKDTPCKINLIPWNPFPGAPYGRSSNSRVDRFSKVLMEYGFTTIVRKTRGDDIDAACGQLAGEVIDRTKRTLKKKMAGEPIAIKTV</sequence>
<reference key="1">
    <citation type="journal article" date="2010" name="J. Bacteriol.">
        <title>Genome sequence of the deep-rooted Yersinia pestis strain Angola reveals new insights into the evolution and pangenome of the plague bacterium.</title>
        <authorList>
            <person name="Eppinger M."/>
            <person name="Worsham P.L."/>
            <person name="Nikolich M.P."/>
            <person name="Riley D.R."/>
            <person name="Sebastian Y."/>
            <person name="Mou S."/>
            <person name="Achtman M."/>
            <person name="Lindler L.E."/>
            <person name="Ravel J."/>
        </authorList>
    </citation>
    <scope>NUCLEOTIDE SEQUENCE [LARGE SCALE GENOMIC DNA]</scope>
    <source>
        <strain>Angola</strain>
    </source>
</reference>
<evidence type="ECO:0000255" key="1">
    <source>
        <dbReference type="HAMAP-Rule" id="MF_01849"/>
    </source>
</evidence>
<evidence type="ECO:0000255" key="2">
    <source>
        <dbReference type="PROSITE-ProRule" id="PRU01266"/>
    </source>
</evidence>